<proteinExistence type="inferred from homology"/>
<gene>
    <name evidence="1" type="primary">ulaF</name>
    <name type="ordered locus">ECED1_5048</name>
</gene>
<reference key="1">
    <citation type="journal article" date="2009" name="PLoS Genet.">
        <title>Organised genome dynamics in the Escherichia coli species results in highly diverse adaptive paths.</title>
        <authorList>
            <person name="Touchon M."/>
            <person name="Hoede C."/>
            <person name="Tenaillon O."/>
            <person name="Barbe V."/>
            <person name="Baeriswyl S."/>
            <person name="Bidet P."/>
            <person name="Bingen E."/>
            <person name="Bonacorsi S."/>
            <person name="Bouchier C."/>
            <person name="Bouvet O."/>
            <person name="Calteau A."/>
            <person name="Chiapello H."/>
            <person name="Clermont O."/>
            <person name="Cruveiller S."/>
            <person name="Danchin A."/>
            <person name="Diard M."/>
            <person name="Dossat C."/>
            <person name="Karoui M.E."/>
            <person name="Frapy E."/>
            <person name="Garry L."/>
            <person name="Ghigo J.M."/>
            <person name="Gilles A.M."/>
            <person name="Johnson J."/>
            <person name="Le Bouguenec C."/>
            <person name="Lescat M."/>
            <person name="Mangenot S."/>
            <person name="Martinez-Jehanne V."/>
            <person name="Matic I."/>
            <person name="Nassif X."/>
            <person name="Oztas S."/>
            <person name="Petit M.A."/>
            <person name="Pichon C."/>
            <person name="Rouy Z."/>
            <person name="Ruf C.S."/>
            <person name="Schneider D."/>
            <person name="Tourret J."/>
            <person name="Vacherie B."/>
            <person name="Vallenet D."/>
            <person name="Medigue C."/>
            <person name="Rocha E.P.C."/>
            <person name="Denamur E."/>
        </authorList>
    </citation>
    <scope>NUCLEOTIDE SEQUENCE [LARGE SCALE GENOMIC DNA]</scope>
    <source>
        <strain>ED1a</strain>
    </source>
</reference>
<comment type="function">
    <text evidence="1">Catalyzes the isomerization of L-ribulose 5-phosphate to D-xylulose 5-phosphate. Is involved in the anaerobic L-ascorbate utilization.</text>
</comment>
<comment type="catalytic activity">
    <reaction evidence="1">
        <text>L-ribulose 5-phosphate = D-xylulose 5-phosphate</text>
        <dbReference type="Rhea" id="RHEA:22368"/>
        <dbReference type="ChEBI" id="CHEBI:57737"/>
        <dbReference type="ChEBI" id="CHEBI:58226"/>
        <dbReference type="EC" id="5.1.3.4"/>
    </reaction>
</comment>
<comment type="cofactor">
    <cofactor evidence="1">
        <name>Zn(2+)</name>
        <dbReference type="ChEBI" id="CHEBI:29105"/>
    </cofactor>
    <text evidence="1">Binds 1 zinc ion per subunit.</text>
</comment>
<comment type="pathway">
    <text evidence="1">Cofactor degradation; L-ascorbate degradation; D-xylulose 5-phosphate from L-ascorbate: step 4/4.</text>
</comment>
<comment type="induction">
    <text evidence="1">Induced by L-ascorbate. Repressed by UlaR.</text>
</comment>
<comment type="similarity">
    <text evidence="1">Belongs to the aldolase class II family. AraD/FucA subfamily.</text>
</comment>
<dbReference type="EC" id="5.1.3.4" evidence="1"/>
<dbReference type="EMBL" id="CU928162">
    <property type="protein sequence ID" value="CAR11003.1"/>
    <property type="molecule type" value="Genomic_DNA"/>
</dbReference>
<dbReference type="RefSeq" id="WP_001170854.1">
    <property type="nucleotide sequence ID" value="NC_011745.1"/>
</dbReference>
<dbReference type="SMR" id="B7MSS8"/>
<dbReference type="KEGG" id="ecq:ECED1_5048"/>
<dbReference type="HOGENOM" id="CLU_006033_5_0_6"/>
<dbReference type="UniPathway" id="UPA00263">
    <property type="reaction ID" value="UER00380"/>
</dbReference>
<dbReference type="Proteomes" id="UP000000748">
    <property type="component" value="Chromosome"/>
</dbReference>
<dbReference type="GO" id="GO:0005829">
    <property type="term" value="C:cytosol"/>
    <property type="evidence" value="ECO:0007669"/>
    <property type="project" value="TreeGrafter"/>
</dbReference>
<dbReference type="GO" id="GO:0016832">
    <property type="term" value="F:aldehyde-lyase activity"/>
    <property type="evidence" value="ECO:0007669"/>
    <property type="project" value="TreeGrafter"/>
</dbReference>
<dbReference type="GO" id="GO:0008742">
    <property type="term" value="F:L-ribulose-phosphate 4-epimerase activity"/>
    <property type="evidence" value="ECO:0007669"/>
    <property type="project" value="UniProtKB-UniRule"/>
</dbReference>
<dbReference type="GO" id="GO:0008270">
    <property type="term" value="F:zinc ion binding"/>
    <property type="evidence" value="ECO:0007669"/>
    <property type="project" value="UniProtKB-UniRule"/>
</dbReference>
<dbReference type="GO" id="GO:0019854">
    <property type="term" value="P:L-ascorbic acid catabolic process"/>
    <property type="evidence" value="ECO:0007669"/>
    <property type="project" value="UniProtKB-UniRule"/>
</dbReference>
<dbReference type="GO" id="GO:0019323">
    <property type="term" value="P:pentose catabolic process"/>
    <property type="evidence" value="ECO:0007669"/>
    <property type="project" value="TreeGrafter"/>
</dbReference>
<dbReference type="CDD" id="cd00398">
    <property type="entry name" value="Aldolase_II"/>
    <property type="match status" value="1"/>
</dbReference>
<dbReference type="FunFam" id="3.40.225.10:FF:000001">
    <property type="entry name" value="L-ribulose-5-phosphate 4-epimerase UlaF"/>
    <property type="match status" value="1"/>
</dbReference>
<dbReference type="Gene3D" id="3.40.225.10">
    <property type="entry name" value="Class II aldolase/adducin N-terminal domain"/>
    <property type="match status" value="1"/>
</dbReference>
<dbReference type="HAMAP" id="MF_01952">
    <property type="entry name" value="UlaF"/>
    <property type="match status" value="1"/>
</dbReference>
<dbReference type="InterPro" id="IPR050197">
    <property type="entry name" value="Aldolase_class_II_sugar_metab"/>
</dbReference>
<dbReference type="InterPro" id="IPR001303">
    <property type="entry name" value="Aldolase_II/adducin_N"/>
</dbReference>
<dbReference type="InterPro" id="IPR036409">
    <property type="entry name" value="Aldolase_II/adducin_N_sf"/>
</dbReference>
<dbReference type="InterPro" id="IPR023499">
    <property type="entry name" value="UlaF"/>
</dbReference>
<dbReference type="NCBIfam" id="NF006047">
    <property type="entry name" value="PRK08193.1"/>
    <property type="match status" value="1"/>
</dbReference>
<dbReference type="NCBIfam" id="NF009003">
    <property type="entry name" value="PRK12348.1"/>
    <property type="match status" value="1"/>
</dbReference>
<dbReference type="PANTHER" id="PTHR22789">
    <property type="entry name" value="FUCULOSE PHOSPHATE ALDOLASE"/>
    <property type="match status" value="1"/>
</dbReference>
<dbReference type="PANTHER" id="PTHR22789:SF9">
    <property type="entry name" value="L-RIBULOSE-5-PHOSPHATE 4-EPIMERASE ULAF"/>
    <property type="match status" value="1"/>
</dbReference>
<dbReference type="Pfam" id="PF00596">
    <property type="entry name" value="Aldolase_II"/>
    <property type="match status" value="1"/>
</dbReference>
<dbReference type="SMART" id="SM01007">
    <property type="entry name" value="Aldolase_II"/>
    <property type="match status" value="1"/>
</dbReference>
<dbReference type="SUPFAM" id="SSF53639">
    <property type="entry name" value="AraD/HMP-PK domain-like"/>
    <property type="match status" value="1"/>
</dbReference>
<sequence length="228" mass="25339">MQKLKQQVFEANMELPRYGLVTFTWGNVSAIDRERGLVVIKPSGVAYETMKADDMVVVDMSGNVVEGEYRPSSDTATHLELYRRYPSLGGIVHTHSTHATAWAQAGLAIPALGTTHADYFFGDIPCTRGLSEEEVQGEYELNTGKVIIETLGDAEPLHTPGIVVYQHGPFAWGKDAHDAVHNAVVMEEVAKMAWIARSINPQLNHIDSFLMNKHFMRKHGPNAYYGQK</sequence>
<accession>B7MSS8</accession>
<organism>
    <name type="scientific">Escherichia coli O81 (strain ED1a)</name>
    <dbReference type="NCBI Taxonomy" id="585397"/>
    <lineage>
        <taxon>Bacteria</taxon>
        <taxon>Pseudomonadati</taxon>
        <taxon>Pseudomonadota</taxon>
        <taxon>Gammaproteobacteria</taxon>
        <taxon>Enterobacterales</taxon>
        <taxon>Enterobacteriaceae</taxon>
        <taxon>Escherichia</taxon>
    </lineage>
</organism>
<name>ULAF_ECO81</name>
<keyword id="KW-0119">Carbohydrate metabolism</keyword>
<keyword id="KW-0413">Isomerase</keyword>
<keyword id="KW-0479">Metal-binding</keyword>
<keyword id="KW-0862">Zinc</keyword>
<feature type="chain" id="PRO_1000188844" description="L-ribulose-5-phosphate 4-epimerase UlaF">
    <location>
        <begin position="1"/>
        <end position="228"/>
    </location>
</feature>
<feature type="active site" description="Proton donor/acceptor" evidence="1">
    <location>
        <position position="118"/>
    </location>
</feature>
<feature type="active site" description="Proton donor/acceptor" evidence="1">
    <location>
        <position position="225"/>
    </location>
</feature>
<feature type="binding site" evidence="1">
    <location>
        <begin position="26"/>
        <end position="27"/>
    </location>
    <ligand>
        <name>substrate</name>
    </ligand>
</feature>
<feature type="binding site" evidence="1">
    <location>
        <begin position="43"/>
        <end position="44"/>
    </location>
    <ligand>
        <name>substrate</name>
    </ligand>
</feature>
<feature type="binding site" evidence="1">
    <location>
        <begin position="72"/>
        <end position="73"/>
    </location>
    <ligand>
        <name>substrate</name>
    </ligand>
</feature>
<feature type="binding site" evidence="1">
    <location>
        <position position="74"/>
    </location>
    <ligand>
        <name>Zn(2+)</name>
        <dbReference type="ChEBI" id="CHEBI:29105"/>
    </ligand>
</feature>
<feature type="binding site" evidence="1">
    <location>
        <position position="93"/>
    </location>
    <ligand>
        <name>Zn(2+)</name>
        <dbReference type="ChEBI" id="CHEBI:29105"/>
    </ligand>
</feature>
<feature type="binding site" evidence="1">
    <location>
        <position position="95"/>
    </location>
    <ligand>
        <name>Zn(2+)</name>
        <dbReference type="ChEBI" id="CHEBI:29105"/>
    </ligand>
</feature>
<feature type="binding site" evidence="1">
    <location>
        <position position="167"/>
    </location>
    <ligand>
        <name>Zn(2+)</name>
        <dbReference type="ChEBI" id="CHEBI:29105"/>
    </ligand>
</feature>
<evidence type="ECO:0000255" key="1">
    <source>
        <dbReference type="HAMAP-Rule" id="MF_01952"/>
    </source>
</evidence>
<protein>
    <recommendedName>
        <fullName evidence="1">L-ribulose-5-phosphate 4-epimerase UlaF</fullName>
        <ecNumber evidence="1">5.1.3.4</ecNumber>
    </recommendedName>
    <alternativeName>
        <fullName evidence="1">L-ascorbate utilization protein F</fullName>
    </alternativeName>
    <alternativeName>
        <fullName evidence="1">Phosphoribulose isomerase</fullName>
    </alternativeName>
</protein>